<proteinExistence type="evidence at protein level"/>
<feature type="chain" id="PRO_0000416559" description="Basic leucine zipper 9">
    <location>
        <begin position="1"/>
        <end position="277"/>
    </location>
</feature>
<feature type="domain" description="bZIP" evidence="3">
    <location>
        <begin position="120"/>
        <end position="183"/>
    </location>
</feature>
<feature type="region of interest" description="Disordered" evidence="4">
    <location>
        <begin position="73"/>
        <end position="141"/>
    </location>
</feature>
<feature type="region of interest" description="Basic motif" evidence="3">
    <location>
        <begin position="122"/>
        <end position="141"/>
    </location>
</feature>
<feature type="region of interest" description="Leucine-zipper" evidence="3">
    <location>
        <begin position="148"/>
        <end position="162"/>
    </location>
</feature>
<feature type="short sequence motif" description="Nuclear localization signal" evidence="1">
    <location>
        <begin position="124"/>
        <end position="131"/>
    </location>
</feature>
<feature type="compositionally biased region" description="Polar residues" evidence="4">
    <location>
        <begin position="109"/>
        <end position="118"/>
    </location>
</feature>
<feature type="modified residue" description="Phosphoserine" evidence="2">
    <location>
        <position position="100"/>
    </location>
</feature>
<sequence length="277" mass="30409">MDNHTAKDIGMKRSASELALQEYLTTSPLDPCFDLMNRDYTCELRDSLLWSEGLFPAGPFRDAQSSICENLSADSPVSANKPEVRGGVRRTTSGSSHVNSDDEDAETEAGQSEMTNDPNDLKRIRRMNSNRESAKRSRRRKQEYLVDLETQVDSLKGDNSTLYKQLIDATQQFRSAGTNNRVLKSDVETLRVKVKLAEDLVARGSLTSSLNQLLQTHLSPPSHSISSLHYTGNTSPAITVHSDQSLFPGMTLSGQNSSPGLGNVSSEAVSCVSDIWP</sequence>
<protein>
    <recommendedName>
        <fullName>Basic leucine zipper 9</fullName>
        <shortName>AtbZIP9</shortName>
        <shortName>bZIP protein 9</shortName>
    </recommendedName>
    <alternativeName>
        <fullName>Basic leucine zipper OPAQUE 2 homolog 2</fullName>
        <shortName>Basic leucine zipper O2 homolog 2</shortName>
    </alternativeName>
</protein>
<name>BZIP9_ARATH</name>
<dbReference type="EMBL" id="AF310223">
    <property type="protein sequence ID" value="AAG25728.1"/>
    <property type="molecule type" value="mRNA"/>
</dbReference>
<dbReference type="EMBL" id="AF069716">
    <property type="status" value="NOT_ANNOTATED_CDS"/>
    <property type="molecule type" value="Genomic_DNA"/>
</dbReference>
<dbReference type="EMBL" id="CP002688">
    <property type="protein sequence ID" value="AED93363.1"/>
    <property type="molecule type" value="Genomic_DNA"/>
</dbReference>
<dbReference type="RefSeq" id="NP_568457.1">
    <property type="nucleotide sequence ID" value="NM_122389.4"/>
</dbReference>
<dbReference type="SMR" id="Q9FUD3"/>
<dbReference type="BioGRID" id="17824">
    <property type="interactions" value="24"/>
</dbReference>
<dbReference type="FunCoup" id="Q9FUD3">
    <property type="interactions" value="22"/>
</dbReference>
<dbReference type="IntAct" id="Q9FUD3">
    <property type="interactions" value="19"/>
</dbReference>
<dbReference type="MINT" id="Q9FUD3"/>
<dbReference type="STRING" id="3702.Q9FUD3"/>
<dbReference type="PaxDb" id="3702-AT5G24800.1"/>
<dbReference type="ProteomicsDB" id="240558"/>
<dbReference type="EnsemblPlants" id="AT5G24800.1">
    <property type="protein sequence ID" value="AT5G24800.1"/>
    <property type="gene ID" value="AT5G24800"/>
</dbReference>
<dbReference type="GeneID" id="832549"/>
<dbReference type="Gramene" id="AT5G24800.1">
    <property type="protein sequence ID" value="AT5G24800.1"/>
    <property type="gene ID" value="AT5G24800"/>
</dbReference>
<dbReference type="KEGG" id="ath:AT5G24800"/>
<dbReference type="Araport" id="AT5G24800"/>
<dbReference type="TAIR" id="AT5G24800">
    <property type="gene designation" value="BZIP9"/>
</dbReference>
<dbReference type="eggNOG" id="ENOG502QV87">
    <property type="taxonomic scope" value="Eukaryota"/>
</dbReference>
<dbReference type="HOGENOM" id="CLU_057781_1_0_1"/>
<dbReference type="InParanoid" id="Q9FUD3"/>
<dbReference type="OMA" id="FNDASQH"/>
<dbReference type="PhylomeDB" id="Q9FUD3"/>
<dbReference type="PRO" id="PR:Q9FUD3"/>
<dbReference type="Proteomes" id="UP000006548">
    <property type="component" value="Chromosome 5"/>
</dbReference>
<dbReference type="ExpressionAtlas" id="Q9FUD3">
    <property type="expression patterns" value="baseline and differential"/>
</dbReference>
<dbReference type="GO" id="GO:0005634">
    <property type="term" value="C:nucleus"/>
    <property type="evidence" value="ECO:0000314"/>
    <property type="project" value="TAIR"/>
</dbReference>
<dbReference type="GO" id="GO:0003700">
    <property type="term" value="F:DNA-binding transcription factor activity"/>
    <property type="evidence" value="ECO:0000250"/>
    <property type="project" value="TAIR"/>
</dbReference>
<dbReference type="GO" id="GO:0042803">
    <property type="term" value="F:protein homodimerization activity"/>
    <property type="evidence" value="ECO:0000353"/>
    <property type="project" value="UniProtKB"/>
</dbReference>
<dbReference type="GO" id="GO:0000976">
    <property type="term" value="F:transcription cis-regulatory region binding"/>
    <property type="evidence" value="ECO:0000353"/>
    <property type="project" value="TAIR"/>
</dbReference>
<dbReference type="GO" id="GO:0071333">
    <property type="term" value="P:cellular response to glucose stimulus"/>
    <property type="evidence" value="ECO:0000270"/>
    <property type="project" value="UniProtKB"/>
</dbReference>
<dbReference type="CDD" id="cd14702">
    <property type="entry name" value="bZIP_plant_GBF1"/>
    <property type="match status" value="1"/>
</dbReference>
<dbReference type="FunFam" id="1.20.5.170:FF:000020">
    <property type="entry name" value="BZIP transcription factor"/>
    <property type="match status" value="1"/>
</dbReference>
<dbReference type="Gene3D" id="1.20.5.170">
    <property type="match status" value="1"/>
</dbReference>
<dbReference type="InterPro" id="IPR004827">
    <property type="entry name" value="bZIP"/>
</dbReference>
<dbReference type="InterPro" id="IPR045314">
    <property type="entry name" value="bZIP_plant_GBF1"/>
</dbReference>
<dbReference type="InterPro" id="IPR046347">
    <property type="entry name" value="bZIP_sf"/>
</dbReference>
<dbReference type="PANTHER" id="PTHR46408">
    <property type="entry name" value="BASIC LEUCINE ZIPPER 63"/>
    <property type="match status" value="1"/>
</dbReference>
<dbReference type="PANTHER" id="PTHR46408:SF8">
    <property type="entry name" value="BASIC LEUCINE ZIPPER 9"/>
    <property type="match status" value="1"/>
</dbReference>
<dbReference type="Pfam" id="PF00170">
    <property type="entry name" value="bZIP_1"/>
    <property type="match status" value="1"/>
</dbReference>
<dbReference type="SMART" id="SM00338">
    <property type="entry name" value="BRLZ"/>
    <property type="match status" value="1"/>
</dbReference>
<dbReference type="SUPFAM" id="SSF57959">
    <property type="entry name" value="Leucine zipper domain"/>
    <property type="match status" value="1"/>
</dbReference>
<dbReference type="PROSITE" id="PS50217">
    <property type="entry name" value="BZIP"/>
    <property type="match status" value="1"/>
</dbReference>
<dbReference type="PROSITE" id="PS00036">
    <property type="entry name" value="BZIP_BASIC"/>
    <property type="match status" value="1"/>
</dbReference>
<comment type="function">
    <text evidence="1">Transcription factor.</text>
</comment>
<comment type="subunit">
    <text evidence="6 7 8 11">Homodimer. Interacts with BZIP1, BZIP2, BZIP10, BZIP11, BZIP25, BZIP44, BZIP53 and BZIP63.</text>
</comment>
<comment type="interaction">
    <interactant intactId="EBI-942633">
        <id>Q9FUD3</id>
    </interactant>
    <interactant intactId="EBI-942623">
        <id>Q9FGX2</id>
        <label>BZIP1</label>
    </interactant>
    <organismsDiffer>false</organismsDiffer>
    <experiments>3</experiments>
</comment>
<comment type="interaction">
    <interactant intactId="EBI-942633">
        <id>Q9FUD3</id>
    </interactant>
    <interactant intactId="EBI-942769">
        <id>O65683</id>
        <label>BZIP11</label>
    </interactant>
    <organismsDiffer>false</organismsDiffer>
    <experiments>3</experiments>
</comment>
<comment type="interaction">
    <interactant intactId="EBI-942633">
        <id>Q9FUD3</id>
    </interactant>
    <interactant intactId="EBI-942735">
        <id>Q9SI15</id>
        <label>BZIP2</label>
    </interactant>
    <organismsDiffer>false</organismsDiffer>
    <experiments>3</experiments>
</comment>
<comment type="interaction">
    <interactant intactId="EBI-942633">
        <id>Q9FUD3</id>
    </interactant>
    <interactant intactId="EBI-942804">
        <id>C0Z2L5</id>
        <label>BZIP44</label>
    </interactant>
    <organismsDiffer>false</organismsDiffer>
    <experiments>3</experiments>
</comment>
<comment type="interaction">
    <interactant intactId="EBI-942633">
        <id>Q9FUD3</id>
    </interactant>
    <interactant intactId="EBI-15194487">
        <id>Q29PT3</id>
        <label>BZIP5</label>
    </interactant>
    <organismsDiffer>false</organismsDiffer>
    <experiments>3</experiments>
</comment>
<comment type="interaction">
    <interactant intactId="EBI-942633">
        <id>Q9FUD3</id>
    </interactant>
    <interactant intactId="EBI-942845">
        <id>Q9LZP8</id>
        <label>BZIP53</label>
    </interactant>
    <organismsDiffer>false</organismsDiffer>
    <experiments>5</experiments>
</comment>
<comment type="subcellular location">
    <subcellularLocation>
        <location evidence="3">Nucleus</location>
    </subcellularLocation>
</comment>
<comment type="tissue specificity">
    <text evidence="5 9">Expressed in roots, shoots, stems, young leaves, and flowers, mostly in vascular tissues (e.g. phloem).</text>
</comment>
<comment type="developmental stage">
    <text evidence="9">Present in silique vasculature and funiculi. In the anthers, restricted to the connective tissue at pre- and post-dehiscence stages and detected in the vascular tissue of the stamen filament.</text>
</comment>
<comment type="induction">
    <text evidence="9">Repressed by glucose.</text>
</comment>
<comment type="PTM">
    <text evidence="10">Phosphorylated.</text>
</comment>
<comment type="similarity">
    <text evidence="12">Belongs to the bZIP family.</text>
</comment>
<evidence type="ECO:0000250" key="1"/>
<evidence type="ECO:0000250" key="2">
    <source>
        <dbReference type="UniProtKB" id="Q9M1G6"/>
    </source>
</evidence>
<evidence type="ECO:0000255" key="3">
    <source>
        <dbReference type="PROSITE-ProRule" id="PRU00978"/>
    </source>
</evidence>
<evidence type="ECO:0000256" key="4">
    <source>
        <dbReference type="SAM" id="MobiDB-lite"/>
    </source>
</evidence>
<evidence type="ECO:0000269" key="5">
    <source>
    </source>
</evidence>
<evidence type="ECO:0000269" key="6">
    <source>
    </source>
</evidence>
<evidence type="ECO:0000269" key="7">
    <source>
    </source>
</evidence>
<evidence type="ECO:0000269" key="8">
    <source>
    </source>
</evidence>
<evidence type="ECO:0000269" key="9">
    <source>
    </source>
</evidence>
<evidence type="ECO:0000269" key="10">
    <source>
    </source>
</evidence>
<evidence type="ECO:0000269" key="11">
    <source>
    </source>
</evidence>
<evidence type="ECO:0000305" key="12"/>
<gene>
    <name type="primary">BZIP9</name>
    <name type="synonym">BZO2H2</name>
    <name type="ordered locus">At5g24800</name>
    <name type="ORF">F6A4.10</name>
</gene>
<organism>
    <name type="scientific">Arabidopsis thaliana</name>
    <name type="common">Mouse-ear cress</name>
    <dbReference type="NCBI Taxonomy" id="3702"/>
    <lineage>
        <taxon>Eukaryota</taxon>
        <taxon>Viridiplantae</taxon>
        <taxon>Streptophyta</taxon>
        <taxon>Embryophyta</taxon>
        <taxon>Tracheophyta</taxon>
        <taxon>Spermatophyta</taxon>
        <taxon>Magnoliopsida</taxon>
        <taxon>eudicotyledons</taxon>
        <taxon>Gunneridae</taxon>
        <taxon>Pentapetalae</taxon>
        <taxon>rosids</taxon>
        <taxon>malvids</taxon>
        <taxon>Brassicales</taxon>
        <taxon>Brassicaceae</taxon>
        <taxon>Camelineae</taxon>
        <taxon>Arabidopsis</taxon>
    </lineage>
</organism>
<reference key="1">
    <citation type="journal article" date="2003" name="J. Mol. Evol.">
        <title>Evolutionary pattern of angiosperm bZIP factors homologous to the maize Opaque2 regulatory protein.</title>
        <authorList>
            <person name="Vincentz M."/>
            <person name="Bandeira-Kobarg C."/>
            <person name="Gauer L."/>
            <person name="Schloegl P."/>
            <person name="Leite A."/>
        </authorList>
    </citation>
    <scope>NUCLEOTIDE SEQUENCE [MRNA]</scope>
    <scope>GENE FAMILY</scope>
    <source>
        <strain>cv. Columbia</strain>
    </source>
</reference>
<reference key="2">
    <citation type="journal article" date="2000" name="Nature">
        <title>Sequence and analysis of chromosome 5 of the plant Arabidopsis thaliana.</title>
        <authorList>
            <person name="Tabata S."/>
            <person name="Kaneko T."/>
            <person name="Nakamura Y."/>
            <person name="Kotani H."/>
            <person name="Kato T."/>
            <person name="Asamizu E."/>
            <person name="Miyajima N."/>
            <person name="Sasamoto S."/>
            <person name="Kimura T."/>
            <person name="Hosouchi T."/>
            <person name="Kawashima K."/>
            <person name="Kohara M."/>
            <person name="Matsumoto M."/>
            <person name="Matsuno A."/>
            <person name="Muraki A."/>
            <person name="Nakayama S."/>
            <person name="Nakazaki N."/>
            <person name="Naruo K."/>
            <person name="Okumura S."/>
            <person name="Shinpo S."/>
            <person name="Takeuchi C."/>
            <person name="Wada T."/>
            <person name="Watanabe A."/>
            <person name="Yamada M."/>
            <person name="Yasuda M."/>
            <person name="Sato S."/>
            <person name="de la Bastide M."/>
            <person name="Huang E."/>
            <person name="Spiegel L."/>
            <person name="Gnoj L."/>
            <person name="O'Shaughnessy A."/>
            <person name="Preston R."/>
            <person name="Habermann K."/>
            <person name="Murray J."/>
            <person name="Johnson D."/>
            <person name="Rohlfing T."/>
            <person name="Nelson J."/>
            <person name="Stoneking T."/>
            <person name="Pepin K."/>
            <person name="Spieth J."/>
            <person name="Sekhon M."/>
            <person name="Armstrong J."/>
            <person name="Becker M."/>
            <person name="Belter E."/>
            <person name="Cordum H."/>
            <person name="Cordes M."/>
            <person name="Courtney L."/>
            <person name="Courtney W."/>
            <person name="Dante M."/>
            <person name="Du H."/>
            <person name="Edwards J."/>
            <person name="Fryman J."/>
            <person name="Haakensen B."/>
            <person name="Lamar E."/>
            <person name="Latreille P."/>
            <person name="Leonard S."/>
            <person name="Meyer R."/>
            <person name="Mulvaney E."/>
            <person name="Ozersky P."/>
            <person name="Riley A."/>
            <person name="Strowmatt C."/>
            <person name="Wagner-McPherson C."/>
            <person name="Wollam A."/>
            <person name="Yoakum M."/>
            <person name="Bell M."/>
            <person name="Dedhia N."/>
            <person name="Parnell L."/>
            <person name="Shah R."/>
            <person name="Rodriguez M."/>
            <person name="Hoon See L."/>
            <person name="Vil D."/>
            <person name="Baker J."/>
            <person name="Kirchoff K."/>
            <person name="Toth K."/>
            <person name="King L."/>
            <person name="Bahret A."/>
            <person name="Miller B."/>
            <person name="Marra M.A."/>
            <person name="Martienssen R."/>
            <person name="McCombie W.R."/>
            <person name="Wilson R.K."/>
            <person name="Murphy G."/>
            <person name="Bancroft I."/>
            <person name="Volckaert G."/>
            <person name="Wambutt R."/>
            <person name="Duesterhoeft A."/>
            <person name="Stiekema W."/>
            <person name="Pohl T."/>
            <person name="Entian K.-D."/>
            <person name="Terryn N."/>
            <person name="Hartley N."/>
            <person name="Bent E."/>
            <person name="Johnson S."/>
            <person name="Langham S.-A."/>
            <person name="McCullagh B."/>
            <person name="Robben J."/>
            <person name="Grymonprez B."/>
            <person name="Zimmermann W."/>
            <person name="Ramsperger U."/>
            <person name="Wedler H."/>
            <person name="Balke K."/>
            <person name="Wedler E."/>
            <person name="Peters S."/>
            <person name="van Staveren M."/>
            <person name="Dirkse W."/>
            <person name="Mooijman P."/>
            <person name="Klein Lankhorst R."/>
            <person name="Weitzenegger T."/>
            <person name="Bothe G."/>
            <person name="Rose M."/>
            <person name="Hauf J."/>
            <person name="Berneiser S."/>
            <person name="Hempel S."/>
            <person name="Feldpausch M."/>
            <person name="Lamberth S."/>
            <person name="Villarroel R."/>
            <person name="Gielen J."/>
            <person name="Ardiles W."/>
            <person name="Bents O."/>
            <person name="Lemcke K."/>
            <person name="Kolesov G."/>
            <person name="Mayer K.F.X."/>
            <person name="Rudd S."/>
            <person name="Schoof H."/>
            <person name="Schueller C."/>
            <person name="Zaccaria P."/>
            <person name="Mewes H.-W."/>
            <person name="Bevan M."/>
            <person name="Fransz P.F."/>
        </authorList>
    </citation>
    <scope>NUCLEOTIDE SEQUENCE [LARGE SCALE GENOMIC DNA]</scope>
    <source>
        <strain>cv. Columbia</strain>
    </source>
</reference>
<reference key="3">
    <citation type="journal article" date="2017" name="Plant J.">
        <title>Araport11: a complete reannotation of the Arabidopsis thaliana reference genome.</title>
        <authorList>
            <person name="Cheng C.Y."/>
            <person name="Krishnakumar V."/>
            <person name="Chan A.P."/>
            <person name="Thibaud-Nissen F."/>
            <person name="Schobel S."/>
            <person name="Town C.D."/>
        </authorList>
    </citation>
    <scope>GENOME REANNOTATION</scope>
    <source>
        <strain>cv. Columbia</strain>
    </source>
</reference>
<reference key="4">
    <citation type="journal article" date="2002" name="Trends Plant Sci.">
        <title>bZIP transcription factors in Arabidopsis.</title>
        <authorList>
            <person name="Jakoby M."/>
            <person name="Weisshaar B."/>
            <person name="Droege-Laser W."/>
            <person name="Vicente-Carbajosa J."/>
            <person name="Tiedemann J."/>
            <person name="Kroj T."/>
            <person name="Parcy F."/>
        </authorList>
    </citation>
    <scope>GENE FAMILY</scope>
    <scope>NOMENCLATURE</scope>
</reference>
<reference key="5">
    <citation type="journal article" date="2003" name="J. Biol. Chem.">
        <title>Synergistic activation of seed storage protein gene expression in Arabidopsis by ABI3 and two bZIPs related to OPAQUE2.</title>
        <authorList>
            <person name="Lara P."/>
            <person name="Onate-Sanchez L."/>
            <person name="Abraham Z."/>
            <person name="Ferrandiz C."/>
            <person name="Diaz I."/>
            <person name="Carbonero P."/>
            <person name="Vicente-Carbajosa J."/>
        </authorList>
    </citation>
    <scope>TISSUE SPECIFICITY</scope>
    <scope>GENE FAMILY</scope>
    <source>
        <strain>cv. Columbia</strain>
    </source>
</reference>
<reference key="6">
    <citation type="journal article" date="2006" name="EMBO J.">
        <title>Combinatorial control of Arabidopsis proline dehydrogenase transcription by specific heterodimerisation of bZIP transcription factors.</title>
        <authorList>
            <person name="Weltmeier F."/>
            <person name="Ehlert A."/>
            <person name="Mayer C.S."/>
            <person name="Dietrich K."/>
            <person name="Wang X."/>
            <person name="Schuetze K."/>
            <person name="Alonso R."/>
            <person name="Harter K."/>
            <person name="Vicente-Carbajosa J."/>
            <person name="Droege-Laser W."/>
        </authorList>
    </citation>
    <scope>INTERACTION WITH BZIP53</scope>
</reference>
<reference key="7">
    <citation type="journal article" date="2006" name="Mol. Biol. Evol.">
        <title>Cross-species annotation of basic leucine zipper factor interactions: Insight into the evolution of closed interaction networks.</title>
        <authorList>
            <person name="Deppmann C.D."/>
            <person name="Alvania R.S."/>
            <person name="Taparowsky E.J."/>
        </authorList>
    </citation>
    <scope>SUBUNIT</scope>
</reference>
<reference key="8">
    <citation type="journal article" date="2006" name="Plant J.">
        <title>Two-hybrid protein-protein interaction analysis in Arabidopsis protoplasts: establishment of a heterodimerization map of group C and group S bZIP transcription factors.</title>
        <authorList>
            <person name="Ehlert A."/>
            <person name="Weltmeier F."/>
            <person name="Wang X."/>
            <person name="Mayer C.S."/>
            <person name="Smeekens S."/>
            <person name="Vicente-Carbajosa J."/>
            <person name="Droege-Laser W."/>
        </authorList>
    </citation>
    <scope>INTERACTION WITH BZIP1; BZIP2; BZIP10; BZIP11; BZIP25; BZIP44; BZIP53 AND BZIP63</scope>
</reference>
<reference key="9">
    <citation type="journal article" date="2009" name="Plant Mol. Biol.">
        <title>Expression patterns within the Arabidopsis C/S1 bZIP transcription factor network: availability of heterodimerization partners controls gene expression during stress response and development.</title>
        <authorList>
            <person name="Weltmeier F."/>
            <person name="Rahmani F."/>
            <person name="Ehlert A."/>
            <person name="Dietrich K."/>
            <person name="Schuetze K."/>
            <person name="Wang X."/>
            <person name="Chaban C."/>
            <person name="Hanson J."/>
            <person name="Teige M."/>
            <person name="Harter K."/>
            <person name="Vicente-Carbajosa J."/>
            <person name="Smeekens S."/>
            <person name="Droege-Laser W."/>
        </authorList>
    </citation>
    <scope>TISSUE SPECIFICITY</scope>
    <scope>DEVELOPMENTAL STAGE</scope>
    <scope>INDUCTION BY GLUCOSE</scope>
    <source>
        <strain>cv. Columbia</strain>
    </source>
</reference>
<reference key="10">
    <citation type="journal article" date="2010" name="Eur. J. Cell Biol.">
        <title>The role of phosphorylatable serine residues in the DNA-binding domain of Arabidopsis bZIP transcription factors.</title>
        <authorList>
            <person name="Kirchler T."/>
            <person name="Briesemeister S."/>
            <person name="Singer M."/>
            <person name="Schuetze K."/>
            <person name="Keinath M."/>
            <person name="Kohlbacher O."/>
            <person name="Vicente-Carbajosa J."/>
            <person name="Teige M."/>
            <person name="Harter K."/>
            <person name="Chaban C."/>
        </authorList>
    </citation>
    <scope>PHOSPHORYLATION</scope>
</reference>
<reference key="11">
    <citation type="journal article" date="2010" name="Mol. Plant">
        <title>The arabidopsis bZIP1 transcription factor is involved in sugar signaling, protein networking, and DNA binding.</title>
        <authorList>
            <person name="Kang S.G."/>
            <person name="Price J."/>
            <person name="Lin P.-C."/>
            <person name="Hong J.C."/>
            <person name="Jang J.-C."/>
        </authorList>
    </citation>
    <scope>SUBUNIT</scope>
</reference>
<accession>Q9FUD3</accession>
<keyword id="KW-0238">DNA-binding</keyword>
<keyword id="KW-0539">Nucleus</keyword>
<keyword id="KW-0597">Phosphoprotein</keyword>
<keyword id="KW-1185">Reference proteome</keyword>
<keyword id="KW-0804">Transcription</keyword>
<keyword id="KW-0805">Transcription regulation</keyword>